<protein>
    <recommendedName>
        <fullName evidence="1">Holliday junction branch migration complex subunit RuvA</fullName>
    </recommendedName>
</protein>
<reference key="1">
    <citation type="submission" date="2006-12" db="EMBL/GenBank/DDBJ databases">
        <title>Complete sequence of chromosome 1 of Nocardioides sp. JS614.</title>
        <authorList>
            <person name="Copeland A."/>
            <person name="Lucas S."/>
            <person name="Lapidus A."/>
            <person name="Barry K."/>
            <person name="Detter J.C."/>
            <person name="Glavina del Rio T."/>
            <person name="Hammon N."/>
            <person name="Israni S."/>
            <person name="Dalin E."/>
            <person name="Tice H."/>
            <person name="Pitluck S."/>
            <person name="Thompson L.S."/>
            <person name="Brettin T."/>
            <person name="Bruce D."/>
            <person name="Han C."/>
            <person name="Tapia R."/>
            <person name="Schmutz J."/>
            <person name="Larimer F."/>
            <person name="Land M."/>
            <person name="Hauser L."/>
            <person name="Kyrpides N."/>
            <person name="Kim E."/>
            <person name="Mattes T."/>
            <person name="Gossett J."/>
            <person name="Richardson P."/>
        </authorList>
    </citation>
    <scope>NUCLEOTIDE SEQUENCE [LARGE SCALE GENOMIC DNA]</scope>
    <source>
        <strain>ATCC BAA-499 / JS614</strain>
    </source>
</reference>
<comment type="function">
    <text evidence="1">The RuvA-RuvB-RuvC complex processes Holliday junction (HJ) DNA during genetic recombination and DNA repair, while the RuvA-RuvB complex plays an important role in the rescue of blocked DNA replication forks via replication fork reversal (RFR). RuvA specifically binds to HJ cruciform DNA, conferring on it an open structure. The RuvB hexamer acts as an ATP-dependent pump, pulling dsDNA into and through the RuvAB complex. HJ branch migration allows RuvC to scan DNA until it finds its consensus sequence, where it cleaves and resolves the cruciform DNA.</text>
</comment>
<comment type="subunit">
    <text evidence="1">Homotetramer. Forms an RuvA(8)-RuvB(12)-Holliday junction (HJ) complex. HJ DNA is sandwiched between 2 RuvA tetramers; dsDNA enters through RuvA and exits via RuvB. An RuvB hexamer assembles on each DNA strand where it exits the tetramer. Each RuvB hexamer is contacted by two RuvA subunits (via domain III) on 2 adjacent RuvB subunits; this complex drives branch migration. In the full resolvosome a probable DNA-RuvA(4)-RuvB(12)-RuvC(2) complex forms which resolves the HJ.</text>
</comment>
<comment type="subcellular location">
    <subcellularLocation>
        <location evidence="1">Cytoplasm</location>
    </subcellularLocation>
</comment>
<comment type="domain">
    <text evidence="1">Has three domains with a flexible linker between the domains II and III and assumes an 'L' shape. Domain III is highly mobile and contacts RuvB.</text>
</comment>
<comment type="similarity">
    <text evidence="1">Belongs to the RuvA family.</text>
</comment>
<accession>A1SJA6</accession>
<keyword id="KW-0963">Cytoplasm</keyword>
<keyword id="KW-0227">DNA damage</keyword>
<keyword id="KW-0233">DNA recombination</keyword>
<keyword id="KW-0234">DNA repair</keyword>
<keyword id="KW-0238">DNA-binding</keyword>
<keyword id="KW-1185">Reference proteome</keyword>
<organism>
    <name type="scientific">Nocardioides sp. (strain ATCC BAA-499 / JS614)</name>
    <dbReference type="NCBI Taxonomy" id="196162"/>
    <lineage>
        <taxon>Bacteria</taxon>
        <taxon>Bacillati</taxon>
        <taxon>Actinomycetota</taxon>
        <taxon>Actinomycetes</taxon>
        <taxon>Propionibacteriales</taxon>
        <taxon>Nocardioidaceae</taxon>
        <taxon>Nocardioides</taxon>
    </lineage>
</organism>
<evidence type="ECO:0000255" key="1">
    <source>
        <dbReference type="HAMAP-Rule" id="MF_00031"/>
    </source>
</evidence>
<feature type="chain" id="PRO_1000002501" description="Holliday junction branch migration complex subunit RuvA">
    <location>
        <begin position="1"/>
        <end position="200"/>
    </location>
</feature>
<feature type="region of interest" description="Domain I" evidence="1">
    <location>
        <begin position="1"/>
        <end position="63"/>
    </location>
</feature>
<feature type="region of interest" description="Domain II" evidence="1">
    <location>
        <begin position="64"/>
        <end position="142"/>
    </location>
</feature>
<feature type="region of interest" description="Flexible linker" evidence="1">
    <location>
        <begin position="142"/>
        <end position="146"/>
    </location>
</feature>
<feature type="region of interest" description="Domain III" evidence="1">
    <location>
        <begin position="147"/>
        <end position="200"/>
    </location>
</feature>
<sequence length="200" mass="20585">MIAFVRGQVAAVTLSSAVLEVGGVGLDIMCTPGTLATLRVGQQAALPTSMVVREDSLTLFGFADEDEKQTFELLQTASGVGPKLAQAMLAVLSTDDLRLAITGDDVKTLTRVPGIGQKGAQRIILELRDRIGAPTGAGRSAGVPAPAGAVWRDQVHQGLVGLGWPVRDAEKAVAAVAPEAGDVPDVAALLRAALRTLSKA</sequence>
<dbReference type="EMBL" id="CP000509">
    <property type="protein sequence ID" value="ABL81891.1"/>
    <property type="molecule type" value="Genomic_DNA"/>
</dbReference>
<dbReference type="RefSeq" id="WP_011755832.1">
    <property type="nucleotide sequence ID" value="NC_008699.1"/>
</dbReference>
<dbReference type="SMR" id="A1SJA6"/>
<dbReference type="STRING" id="196162.Noca_2386"/>
<dbReference type="KEGG" id="nca:Noca_2386"/>
<dbReference type="eggNOG" id="COG0632">
    <property type="taxonomic scope" value="Bacteria"/>
</dbReference>
<dbReference type="HOGENOM" id="CLU_087936_2_1_11"/>
<dbReference type="OrthoDB" id="5293449at2"/>
<dbReference type="Proteomes" id="UP000000640">
    <property type="component" value="Chromosome"/>
</dbReference>
<dbReference type="GO" id="GO:0005737">
    <property type="term" value="C:cytoplasm"/>
    <property type="evidence" value="ECO:0007669"/>
    <property type="project" value="UniProtKB-SubCell"/>
</dbReference>
<dbReference type="GO" id="GO:0009379">
    <property type="term" value="C:Holliday junction helicase complex"/>
    <property type="evidence" value="ECO:0007669"/>
    <property type="project" value="InterPro"/>
</dbReference>
<dbReference type="GO" id="GO:0048476">
    <property type="term" value="C:Holliday junction resolvase complex"/>
    <property type="evidence" value="ECO:0007669"/>
    <property type="project" value="UniProtKB-UniRule"/>
</dbReference>
<dbReference type="GO" id="GO:0005524">
    <property type="term" value="F:ATP binding"/>
    <property type="evidence" value="ECO:0007669"/>
    <property type="project" value="InterPro"/>
</dbReference>
<dbReference type="GO" id="GO:0000400">
    <property type="term" value="F:four-way junction DNA binding"/>
    <property type="evidence" value="ECO:0007669"/>
    <property type="project" value="UniProtKB-UniRule"/>
</dbReference>
<dbReference type="GO" id="GO:0009378">
    <property type="term" value="F:four-way junction helicase activity"/>
    <property type="evidence" value="ECO:0007669"/>
    <property type="project" value="InterPro"/>
</dbReference>
<dbReference type="GO" id="GO:0006310">
    <property type="term" value="P:DNA recombination"/>
    <property type="evidence" value="ECO:0007669"/>
    <property type="project" value="UniProtKB-UniRule"/>
</dbReference>
<dbReference type="GO" id="GO:0006281">
    <property type="term" value="P:DNA repair"/>
    <property type="evidence" value="ECO:0007669"/>
    <property type="project" value="UniProtKB-UniRule"/>
</dbReference>
<dbReference type="CDD" id="cd14332">
    <property type="entry name" value="UBA_RuvA_C"/>
    <property type="match status" value="1"/>
</dbReference>
<dbReference type="Gene3D" id="1.10.150.20">
    <property type="entry name" value="5' to 3' exonuclease, C-terminal subdomain"/>
    <property type="match status" value="1"/>
</dbReference>
<dbReference type="Gene3D" id="1.10.8.10">
    <property type="entry name" value="DNA helicase RuvA subunit, C-terminal domain"/>
    <property type="match status" value="1"/>
</dbReference>
<dbReference type="Gene3D" id="2.40.50.140">
    <property type="entry name" value="Nucleic acid-binding proteins"/>
    <property type="match status" value="1"/>
</dbReference>
<dbReference type="HAMAP" id="MF_00031">
    <property type="entry name" value="DNA_HJ_migration_RuvA"/>
    <property type="match status" value="1"/>
</dbReference>
<dbReference type="InterPro" id="IPR013849">
    <property type="entry name" value="DNA_helicase_Holl-junc_RuvA_I"/>
</dbReference>
<dbReference type="InterPro" id="IPR003583">
    <property type="entry name" value="Hlx-hairpin-Hlx_DNA-bd_motif"/>
</dbReference>
<dbReference type="InterPro" id="IPR012340">
    <property type="entry name" value="NA-bd_OB-fold"/>
</dbReference>
<dbReference type="InterPro" id="IPR000085">
    <property type="entry name" value="RuvA"/>
</dbReference>
<dbReference type="InterPro" id="IPR010994">
    <property type="entry name" value="RuvA_2-like"/>
</dbReference>
<dbReference type="InterPro" id="IPR011114">
    <property type="entry name" value="RuvA_C"/>
</dbReference>
<dbReference type="InterPro" id="IPR036267">
    <property type="entry name" value="RuvA_C_sf"/>
</dbReference>
<dbReference type="NCBIfam" id="TIGR00084">
    <property type="entry name" value="ruvA"/>
    <property type="match status" value="1"/>
</dbReference>
<dbReference type="Pfam" id="PF14520">
    <property type="entry name" value="HHH_5"/>
    <property type="match status" value="1"/>
</dbReference>
<dbReference type="Pfam" id="PF07499">
    <property type="entry name" value="RuvA_C"/>
    <property type="match status" value="1"/>
</dbReference>
<dbReference type="Pfam" id="PF01330">
    <property type="entry name" value="RuvA_N"/>
    <property type="match status" value="1"/>
</dbReference>
<dbReference type="SMART" id="SM00278">
    <property type="entry name" value="HhH1"/>
    <property type="match status" value="2"/>
</dbReference>
<dbReference type="SUPFAM" id="SSF46929">
    <property type="entry name" value="DNA helicase RuvA subunit, C-terminal domain"/>
    <property type="match status" value="1"/>
</dbReference>
<dbReference type="SUPFAM" id="SSF50249">
    <property type="entry name" value="Nucleic acid-binding proteins"/>
    <property type="match status" value="1"/>
</dbReference>
<dbReference type="SUPFAM" id="SSF47781">
    <property type="entry name" value="RuvA domain 2-like"/>
    <property type="match status" value="1"/>
</dbReference>
<name>RUVA_NOCSJ</name>
<gene>
    <name evidence="1" type="primary">ruvA</name>
    <name type="ordered locus">Noca_2386</name>
</gene>
<proteinExistence type="inferred from homology"/>